<organism>
    <name type="scientific">Escherichia coli (strain K12)</name>
    <dbReference type="NCBI Taxonomy" id="83333"/>
    <lineage>
        <taxon>Bacteria</taxon>
        <taxon>Pseudomonadati</taxon>
        <taxon>Pseudomonadota</taxon>
        <taxon>Gammaproteobacteria</taxon>
        <taxon>Enterobacterales</taxon>
        <taxon>Enterobacteriaceae</taxon>
        <taxon>Escherichia</taxon>
    </lineage>
</organism>
<proteinExistence type="evidence at protein level"/>
<feature type="chain" id="PRO_0000121575" description="Low specificity L-threonine aldolase">
    <location>
        <begin position="1"/>
        <end position="333"/>
    </location>
</feature>
<feature type="modified residue" description="N6-(pyridoxal phosphate)lysine" evidence="1">
    <location>
        <position position="197"/>
    </location>
</feature>
<feature type="helix" evidence="4">
    <location>
        <begin position="7"/>
        <end position="9"/>
    </location>
</feature>
<feature type="helix" evidence="4">
    <location>
        <begin position="14"/>
        <end position="22"/>
    </location>
</feature>
<feature type="turn" evidence="4">
    <location>
        <begin position="28"/>
        <end position="31"/>
    </location>
</feature>
<feature type="helix" evidence="4">
    <location>
        <begin position="34"/>
        <end position="46"/>
    </location>
</feature>
<feature type="strand" evidence="4">
    <location>
        <begin position="50"/>
        <end position="56"/>
    </location>
</feature>
<feature type="helix" evidence="4">
    <location>
        <begin position="58"/>
        <end position="69"/>
    </location>
</feature>
<feature type="strand" evidence="4">
    <location>
        <begin position="74"/>
        <end position="79"/>
    </location>
</feature>
<feature type="helix" evidence="4">
    <location>
        <begin position="83"/>
        <end position="86"/>
    </location>
</feature>
<feature type="helix" evidence="4">
    <location>
        <begin position="91"/>
        <end position="94"/>
    </location>
</feature>
<feature type="strand" evidence="4">
    <location>
        <begin position="99"/>
        <end position="103"/>
    </location>
</feature>
<feature type="helix" evidence="4">
    <location>
        <begin position="113"/>
        <end position="119"/>
    </location>
</feature>
<feature type="strand" evidence="4">
    <location>
        <begin position="129"/>
        <end position="139"/>
    </location>
</feature>
<feature type="helix" evidence="4">
    <location>
        <begin position="146"/>
        <end position="158"/>
    </location>
</feature>
<feature type="strand" evidence="4">
    <location>
        <begin position="162"/>
        <end position="166"/>
    </location>
</feature>
<feature type="helix" evidence="4">
    <location>
        <begin position="170"/>
        <end position="177"/>
    </location>
</feature>
<feature type="helix" evidence="4">
    <location>
        <begin position="182"/>
        <end position="185"/>
    </location>
</feature>
<feature type="strand" evidence="4">
    <location>
        <begin position="189"/>
        <end position="194"/>
    </location>
</feature>
<feature type="strand" evidence="4">
    <location>
        <begin position="205"/>
        <end position="209"/>
    </location>
</feature>
<feature type="helix" evidence="4">
    <location>
        <begin position="211"/>
        <end position="224"/>
    </location>
</feature>
<feature type="helix" evidence="4">
    <location>
        <begin position="232"/>
        <end position="244"/>
    </location>
</feature>
<feature type="helix" evidence="4">
    <location>
        <begin position="249"/>
        <end position="265"/>
    </location>
</feature>
<feature type="strand" evidence="4">
    <location>
        <begin position="270"/>
        <end position="274"/>
    </location>
</feature>
<feature type="strand" evidence="4">
    <location>
        <begin position="277"/>
        <end position="281"/>
    </location>
</feature>
<feature type="helix" evidence="4">
    <location>
        <begin position="284"/>
        <end position="295"/>
    </location>
</feature>
<feature type="turn" evidence="4">
    <location>
        <begin position="296"/>
        <end position="298"/>
    </location>
</feature>
<feature type="strand" evidence="4">
    <location>
        <begin position="304"/>
        <end position="310"/>
    </location>
</feature>
<feature type="helix" evidence="4">
    <location>
        <begin position="317"/>
        <end position="330"/>
    </location>
</feature>
<accession>P75823</accession>
<dbReference type="EC" id="4.1.2.48"/>
<dbReference type="EMBL" id="AB005050">
    <property type="protein sequence ID" value="BAA20882.1"/>
    <property type="molecule type" value="Genomic_DNA"/>
</dbReference>
<dbReference type="EMBL" id="U00096">
    <property type="protein sequence ID" value="AAC73957.1"/>
    <property type="molecule type" value="Genomic_DNA"/>
</dbReference>
<dbReference type="EMBL" id="AP009048">
    <property type="protein sequence ID" value="BAA35584.1"/>
    <property type="molecule type" value="Genomic_DNA"/>
</dbReference>
<dbReference type="PIR" id="F64825">
    <property type="entry name" value="F64825"/>
</dbReference>
<dbReference type="RefSeq" id="NP_415391.1">
    <property type="nucleotide sequence ID" value="NC_000913.3"/>
</dbReference>
<dbReference type="RefSeq" id="WP_000566376.1">
    <property type="nucleotide sequence ID" value="NZ_SSZK01000002.1"/>
</dbReference>
<dbReference type="PDB" id="3WLX">
    <property type="method" value="X-ray"/>
    <property type="resolution" value="2.51 A"/>
    <property type="chains" value="A/B=1-333"/>
</dbReference>
<dbReference type="PDBsum" id="3WLX"/>
<dbReference type="SMR" id="P75823"/>
<dbReference type="BioGRID" id="4262099">
    <property type="interactions" value="23"/>
</dbReference>
<dbReference type="FunCoup" id="P75823">
    <property type="interactions" value="652"/>
</dbReference>
<dbReference type="IntAct" id="P75823">
    <property type="interactions" value="1"/>
</dbReference>
<dbReference type="MINT" id="P75823"/>
<dbReference type="STRING" id="511145.b0870"/>
<dbReference type="jPOST" id="P75823"/>
<dbReference type="PaxDb" id="511145-b0870"/>
<dbReference type="EnsemblBacteria" id="AAC73957">
    <property type="protein sequence ID" value="AAC73957"/>
    <property type="gene ID" value="b0870"/>
</dbReference>
<dbReference type="GeneID" id="944955"/>
<dbReference type="KEGG" id="ecj:JW0854"/>
<dbReference type="KEGG" id="eco:b0870"/>
<dbReference type="KEGG" id="ecoc:C3026_05410"/>
<dbReference type="PATRIC" id="fig|1411691.4.peg.1407"/>
<dbReference type="EchoBASE" id="EB3454"/>
<dbReference type="eggNOG" id="COG2008">
    <property type="taxonomic scope" value="Bacteria"/>
</dbReference>
<dbReference type="HOGENOM" id="CLU_029381_0_3_6"/>
<dbReference type="InParanoid" id="P75823"/>
<dbReference type="OMA" id="VQTNIVI"/>
<dbReference type="OrthoDB" id="9774495at2"/>
<dbReference type="PhylomeDB" id="P75823"/>
<dbReference type="BioCyc" id="EcoCyc:LTAA-MONOMER"/>
<dbReference type="BioCyc" id="MetaCyc:LTAA-MONOMER"/>
<dbReference type="BRENDA" id="4.1.2.48">
    <property type="organism ID" value="2026"/>
</dbReference>
<dbReference type="EvolutionaryTrace" id="P75823"/>
<dbReference type="PRO" id="PR:P75823"/>
<dbReference type="Proteomes" id="UP000000625">
    <property type="component" value="Chromosome"/>
</dbReference>
<dbReference type="GO" id="GO:0005829">
    <property type="term" value="C:cytosol"/>
    <property type="evidence" value="ECO:0000314"/>
    <property type="project" value="EcoCyc"/>
</dbReference>
<dbReference type="GO" id="GO:0042802">
    <property type="term" value="F:identical protein binding"/>
    <property type="evidence" value="ECO:0000353"/>
    <property type="project" value="IntAct"/>
</dbReference>
<dbReference type="GO" id="GO:0008732">
    <property type="term" value="F:L-allo-threonine aldolase activity"/>
    <property type="evidence" value="ECO:0000314"/>
    <property type="project" value="EcoCyc"/>
</dbReference>
<dbReference type="GO" id="GO:0050179">
    <property type="term" value="F:phenylserine aldolase activity"/>
    <property type="evidence" value="ECO:0000314"/>
    <property type="project" value="EcoCyc"/>
</dbReference>
<dbReference type="GO" id="GO:0030170">
    <property type="term" value="F:pyridoxal phosphate binding"/>
    <property type="evidence" value="ECO:0000314"/>
    <property type="project" value="EcoCyc"/>
</dbReference>
<dbReference type="GO" id="GO:0006545">
    <property type="term" value="P:glycine biosynthetic process"/>
    <property type="evidence" value="ECO:0000269"/>
    <property type="project" value="EcoCyc"/>
</dbReference>
<dbReference type="GO" id="GO:0006567">
    <property type="term" value="P:threonine catabolic process"/>
    <property type="evidence" value="ECO:0000318"/>
    <property type="project" value="GO_Central"/>
</dbReference>
<dbReference type="CDD" id="cd06502">
    <property type="entry name" value="TA_like"/>
    <property type="match status" value="1"/>
</dbReference>
<dbReference type="FunFam" id="3.40.640.10:FF:000030">
    <property type="entry name" value="Low-specificity L-threonine aldolase"/>
    <property type="match status" value="1"/>
</dbReference>
<dbReference type="FunFam" id="3.90.1150.10:FF:000044">
    <property type="entry name" value="Low-specificity L-threonine aldolase"/>
    <property type="match status" value="1"/>
</dbReference>
<dbReference type="Gene3D" id="3.90.1150.10">
    <property type="entry name" value="Aspartate Aminotransferase, domain 1"/>
    <property type="match status" value="1"/>
</dbReference>
<dbReference type="Gene3D" id="3.40.640.10">
    <property type="entry name" value="Type I PLP-dependent aspartate aminotransferase-like (Major domain)"/>
    <property type="match status" value="1"/>
</dbReference>
<dbReference type="InterPro" id="IPR001597">
    <property type="entry name" value="ArAA_b-elim_lyase/Thr_aldolase"/>
</dbReference>
<dbReference type="InterPro" id="IPR023603">
    <property type="entry name" value="Low_specificity_L-TA-like"/>
</dbReference>
<dbReference type="InterPro" id="IPR015424">
    <property type="entry name" value="PyrdxlP-dep_Trfase"/>
</dbReference>
<dbReference type="InterPro" id="IPR015421">
    <property type="entry name" value="PyrdxlP-dep_Trfase_major"/>
</dbReference>
<dbReference type="InterPro" id="IPR015422">
    <property type="entry name" value="PyrdxlP-dep_Trfase_small"/>
</dbReference>
<dbReference type="NCBIfam" id="NF041359">
    <property type="entry name" value="GntG_guanitoxin"/>
    <property type="match status" value="1"/>
</dbReference>
<dbReference type="NCBIfam" id="NF007825">
    <property type="entry name" value="PRK10534.1"/>
    <property type="match status" value="1"/>
</dbReference>
<dbReference type="PANTHER" id="PTHR48097:SF9">
    <property type="entry name" value="L-THREONINE ALDOLASE"/>
    <property type="match status" value="1"/>
</dbReference>
<dbReference type="PANTHER" id="PTHR48097">
    <property type="entry name" value="L-THREONINE ALDOLASE-RELATED"/>
    <property type="match status" value="1"/>
</dbReference>
<dbReference type="Pfam" id="PF01212">
    <property type="entry name" value="Beta_elim_lyase"/>
    <property type="match status" value="1"/>
</dbReference>
<dbReference type="PIRSF" id="PIRSF017617">
    <property type="entry name" value="Thr_aldolase"/>
    <property type="match status" value="1"/>
</dbReference>
<dbReference type="SUPFAM" id="SSF53383">
    <property type="entry name" value="PLP-dependent transferases"/>
    <property type="match status" value="1"/>
</dbReference>
<protein>
    <recommendedName>
        <fullName>Low specificity L-threonine aldolase</fullName>
        <shortName>Low specificity L-TA</shortName>
        <ecNumber>4.1.2.48</ecNumber>
    </recommendedName>
</protein>
<comment type="function">
    <text>Catalyzes the cleavage of L-allo-threonine and L-threonine to glycine and acetaldehyde. L-threo-phenylserine and L-erythro-phenylserine are also good substrates.</text>
</comment>
<comment type="catalytic activity">
    <reaction evidence="2">
        <text>L-threonine = acetaldehyde + glycine</text>
        <dbReference type="Rhea" id="RHEA:19625"/>
        <dbReference type="ChEBI" id="CHEBI:15343"/>
        <dbReference type="ChEBI" id="CHEBI:57305"/>
        <dbReference type="ChEBI" id="CHEBI:57926"/>
        <dbReference type="EC" id="4.1.2.48"/>
    </reaction>
</comment>
<comment type="catalytic activity">
    <reaction evidence="2">
        <text>L-allo-threonine = acetaldehyde + glycine</text>
        <dbReference type="Rhea" id="RHEA:26209"/>
        <dbReference type="ChEBI" id="CHEBI:15343"/>
        <dbReference type="ChEBI" id="CHEBI:57305"/>
        <dbReference type="ChEBI" id="CHEBI:58585"/>
        <dbReference type="EC" id="4.1.2.48"/>
    </reaction>
</comment>
<comment type="cofactor">
    <cofactor>
        <name>pyridoxal 5'-phosphate</name>
        <dbReference type="ChEBI" id="CHEBI:597326"/>
    </cofactor>
</comment>
<comment type="biophysicochemical properties">
    <phDependence>
        <text>Optimum pH is 8.5-9.0.</text>
    </phDependence>
    <temperatureDependence>
        <text>Optimum temperature is 65-70 degrees Celsius.</text>
    </temperatureDependence>
</comment>
<comment type="subunit">
    <text evidence="3">Homotetramer.</text>
</comment>
<comment type="interaction">
    <interactant intactId="EBI-1120660">
        <id>P75823</id>
    </interactant>
    <interactant intactId="EBI-1120660">
        <id>P75823</id>
        <label>ltaE</label>
    </interactant>
    <organismsDiffer>false</organismsDiffer>
    <experiments>2</experiments>
</comment>
<comment type="similarity">
    <text evidence="3">Belongs to the threonine aldolase family.</text>
</comment>
<reference key="1">
    <citation type="journal article" date="1998" name="Eur. J. Biochem.">
        <title>Gene cloning, biochemical characterization and physiological role of a thermostable low-specificity L-threonine aldolase from Escherichia coli.</title>
        <authorList>
            <person name="Liu J.-Q."/>
            <person name="Dairi T."/>
            <person name="Itoh N."/>
            <person name="Kataoka M."/>
            <person name="Shimizu S."/>
            <person name="Yamada H."/>
        </authorList>
    </citation>
    <scope>NUCLEOTIDE SEQUENCE [GENOMIC DNA]</scope>
    <scope>PROTEIN SEQUENCE OF N-TERMINUS</scope>
    <scope>CATALYTIC ACTIVITY</scope>
    <scope>CHARACTERIZATION</scope>
    <source>
        <strain>GS245</strain>
        <strain>K12 / ME9012</strain>
    </source>
</reference>
<reference key="2">
    <citation type="journal article" date="1996" name="DNA Res.">
        <title>A 718-kb DNA sequence of the Escherichia coli K-12 genome corresponding to the 12.7-28.0 min region on the linkage map.</title>
        <authorList>
            <person name="Oshima T."/>
            <person name="Aiba H."/>
            <person name="Baba T."/>
            <person name="Fujita K."/>
            <person name="Hayashi K."/>
            <person name="Honjo A."/>
            <person name="Ikemoto K."/>
            <person name="Inada T."/>
            <person name="Itoh T."/>
            <person name="Kajihara M."/>
            <person name="Kanai K."/>
            <person name="Kashimoto K."/>
            <person name="Kimura S."/>
            <person name="Kitagawa M."/>
            <person name="Makino K."/>
            <person name="Masuda S."/>
            <person name="Miki T."/>
            <person name="Mizobuchi K."/>
            <person name="Mori H."/>
            <person name="Motomura K."/>
            <person name="Nakamura Y."/>
            <person name="Nashimoto H."/>
            <person name="Nishio Y."/>
            <person name="Saito N."/>
            <person name="Sampei G."/>
            <person name="Seki Y."/>
            <person name="Tagami H."/>
            <person name="Takemoto K."/>
            <person name="Wada C."/>
            <person name="Yamamoto Y."/>
            <person name="Yano M."/>
            <person name="Horiuchi T."/>
        </authorList>
    </citation>
    <scope>NUCLEOTIDE SEQUENCE [LARGE SCALE GENOMIC DNA]</scope>
    <source>
        <strain>K12 / W3110 / ATCC 27325 / DSM 5911</strain>
    </source>
</reference>
<reference key="3">
    <citation type="journal article" date="1997" name="Science">
        <title>The complete genome sequence of Escherichia coli K-12.</title>
        <authorList>
            <person name="Blattner F.R."/>
            <person name="Plunkett G. III"/>
            <person name="Bloch C.A."/>
            <person name="Perna N.T."/>
            <person name="Burland V."/>
            <person name="Riley M."/>
            <person name="Collado-Vides J."/>
            <person name="Glasner J.D."/>
            <person name="Rode C.K."/>
            <person name="Mayhew G.F."/>
            <person name="Gregor J."/>
            <person name="Davis N.W."/>
            <person name="Kirkpatrick H.A."/>
            <person name="Goeden M.A."/>
            <person name="Rose D.J."/>
            <person name="Mau B."/>
            <person name="Shao Y."/>
        </authorList>
    </citation>
    <scope>NUCLEOTIDE SEQUENCE [LARGE SCALE GENOMIC DNA]</scope>
    <source>
        <strain>K12 / MG1655 / ATCC 47076</strain>
    </source>
</reference>
<reference key="4">
    <citation type="journal article" date="2006" name="Mol. Syst. Biol.">
        <title>Highly accurate genome sequences of Escherichia coli K-12 strains MG1655 and W3110.</title>
        <authorList>
            <person name="Hayashi K."/>
            <person name="Morooka N."/>
            <person name="Yamamoto Y."/>
            <person name="Fujita K."/>
            <person name="Isono K."/>
            <person name="Choi S."/>
            <person name="Ohtsubo E."/>
            <person name="Baba T."/>
            <person name="Wanner B.L."/>
            <person name="Mori H."/>
            <person name="Horiuchi T."/>
        </authorList>
    </citation>
    <scope>NUCLEOTIDE SEQUENCE [LARGE SCALE GENOMIC DNA]</scope>
    <source>
        <strain>K12 / W3110 / ATCC 27325 / DSM 5911</strain>
    </source>
</reference>
<name>LTAE_ECOLI</name>
<gene>
    <name type="primary">ltaE</name>
    <name type="synonym">ybjU</name>
    <name type="ordered locus">b0870</name>
    <name type="ordered locus">JW0854</name>
</gene>
<sequence length="333" mass="36495">MIDLRSDTVTRPSRAMLEAMMAAPVGDDVYGDDPTVNALQDYAAELSGKEAAIFLPTGTQANLVALLSHCERGEEYIVGQAAHNYLFEAGGAAVLGSIQPQPIDAAADGTLPLDKVAMKIKPDDIHFARTKLLSLENTHNGKVLPREYLKEAWEFTRERNLALHVDGARIFNAVVAYGCELKEITQYCDSFTICLSKGLGTPVGSLLVGNRDYIKRAIRWRKMTGGGMRQSGILAAAGIYALKNNVARLQEDHDNAAWMAEQLREAGADVMRQDTNMLFVRVGEENAAALGEYMKARNVLINASPIVRLVTHLDVSREQLAEVAAHWRAFLAR</sequence>
<evidence type="ECO:0000250" key="1"/>
<evidence type="ECO:0000269" key="2">
    <source>
    </source>
</evidence>
<evidence type="ECO:0000305" key="3"/>
<evidence type="ECO:0007829" key="4">
    <source>
        <dbReference type="PDB" id="3WLX"/>
    </source>
</evidence>
<keyword id="KW-0002">3D-structure</keyword>
<keyword id="KW-0903">Direct protein sequencing</keyword>
<keyword id="KW-0456">Lyase</keyword>
<keyword id="KW-0663">Pyridoxal phosphate</keyword>
<keyword id="KW-1185">Reference proteome</keyword>